<reference key="1">
    <citation type="journal article" date="1997" name="Nature">
        <title>The complete genome sequence of the gastric pathogen Helicobacter pylori.</title>
        <authorList>
            <person name="Tomb J.-F."/>
            <person name="White O."/>
            <person name="Kerlavage A.R."/>
            <person name="Clayton R.A."/>
            <person name="Sutton G.G."/>
            <person name="Fleischmann R.D."/>
            <person name="Ketchum K.A."/>
            <person name="Klenk H.-P."/>
            <person name="Gill S.R."/>
            <person name="Dougherty B.A."/>
            <person name="Nelson K.E."/>
            <person name="Quackenbush J."/>
            <person name="Zhou L."/>
            <person name="Kirkness E.F."/>
            <person name="Peterson S.N."/>
            <person name="Loftus B.J."/>
            <person name="Richardson D.L."/>
            <person name="Dodson R.J."/>
            <person name="Khalak H.G."/>
            <person name="Glodek A."/>
            <person name="McKenney K."/>
            <person name="FitzGerald L.M."/>
            <person name="Lee N."/>
            <person name="Adams M.D."/>
            <person name="Hickey E.K."/>
            <person name="Berg D.E."/>
            <person name="Gocayne J.D."/>
            <person name="Utterback T.R."/>
            <person name="Peterson J.D."/>
            <person name="Kelley J.M."/>
            <person name="Cotton M.D."/>
            <person name="Weidman J.F."/>
            <person name="Fujii C."/>
            <person name="Bowman C."/>
            <person name="Watthey L."/>
            <person name="Wallin E."/>
            <person name="Hayes W.S."/>
            <person name="Borodovsky M."/>
            <person name="Karp P.D."/>
            <person name="Smith H.O."/>
            <person name="Fraser C.M."/>
            <person name="Venter J.C."/>
        </authorList>
    </citation>
    <scope>NUCLEOTIDE SEQUENCE [LARGE SCALE GENOMIC DNA]</scope>
    <source>
        <strain>ATCC 700392 / 26695</strain>
    </source>
</reference>
<reference key="2">
    <citation type="journal article" date="2001" name="Microbiology">
        <title>Chemotaxis in the human gastric pathogen Helicobacter pylori: different roles for CheW and the three CheV paralogues, and evidence for CheV2 phosphorylation.</title>
        <authorList>
            <person name="Pittman M.S."/>
            <person name="Goodwin M."/>
            <person name="Kelly D.J."/>
        </authorList>
    </citation>
    <scope>FUNCTION</scope>
    <scope>DISRUPTION PHENOTYPE</scope>
</reference>
<reference key="3">
    <citation type="journal article" date="2009" name="Microbiology">
        <title>A fixed-time diffusion analysis method determines that the three cheV genes of Helicobacter pylori differentially affect motility.</title>
        <authorList>
            <person name="Lowenthal A.C."/>
            <person name="Simon C."/>
            <person name="Fair A.S."/>
            <person name="Mehmood K."/>
            <person name="Terry K."/>
            <person name="Anastasia S."/>
            <person name="Ottemann K.M."/>
        </authorList>
    </citation>
    <scope>FUNCTION</scope>
    <scope>DISRUPTION PHENOTYPE</scope>
</reference>
<sequence>MAEKTANDLKLSEIELVDFRIYGMQEGVPYEGIYGINVAKVQEIIPMPTLFEYPTNLDYIIGVFDLRSIIIPLIDLAKWIGIIPDKSKENEKIVIITEFNNVKMGFLVHSARRIRRISWKDVEPASFSASNSINKENITGTTRIENDKTLLILDLESILDDLKLNEDAKNAKDTHKERFEGEVLFLDDSKTARKTLKNHLSKLGFSITEAVDGEDGLNKLEMLFKKYGDDLRKHLKFIISDVEMPKMDGYHFLFKLQKDPRFAYIPVIFNSSICDNYSAERAKEMGAVAYLVKFDAEKFTEEISKILDKNA</sequence>
<gene>
    <name evidence="5" type="primary">cheV3</name>
    <name type="ordered locus">HP_0393</name>
</gene>
<protein>
    <recommendedName>
        <fullName evidence="5">Chemotaxis protein CheV3</fullName>
    </recommendedName>
</protein>
<keyword id="KW-0597">Phosphoprotein</keyword>
<keyword id="KW-1185">Reference proteome</keyword>
<evidence type="ECO:0000255" key="1">
    <source>
        <dbReference type="PROSITE-ProRule" id="PRU00052"/>
    </source>
</evidence>
<evidence type="ECO:0000255" key="2">
    <source>
        <dbReference type="PROSITE-ProRule" id="PRU00169"/>
    </source>
</evidence>
<evidence type="ECO:0000269" key="3">
    <source>
    </source>
</evidence>
<evidence type="ECO:0000269" key="4">
    <source>
    </source>
</evidence>
<evidence type="ECO:0000303" key="5">
    <source>
    </source>
</evidence>
<comment type="function">
    <text evidence="3 4">Plays a role in chemotaxis signal transduction system in order to colonize the host stomach. May act as a phosphate sink to control the flow of phosphate to CheAY.</text>
</comment>
<comment type="disruption phenotype">
    <text evidence="3 4">Deletion mutant is fully chemotactic and forms swarms the same way as wild-type strain (PubMed:11535789). Mutant appears however to change direction frequently and shows defects in mouse colonization (PubMed:19332820).</text>
</comment>
<accession>O25154</accession>
<organism>
    <name type="scientific">Helicobacter pylori (strain ATCC 700392 / 26695)</name>
    <name type="common">Campylobacter pylori</name>
    <dbReference type="NCBI Taxonomy" id="85962"/>
    <lineage>
        <taxon>Bacteria</taxon>
        <taxon>Pseudomonadati</taxon>
        <taxon>Campylobacterota</taxon>
        <taxon>Epsilonproteobacteria</taxon>
        <taxon>Campylobacterales</taxon>
        <taxon>Helicobacteraceae</taxon>
        <taxon>Helicobacter</taxon>
    </lineage>
</organism>
<feature type="chain" id="PRO_0000448751" description="Chemotaxis protein CheV3">
    <location>
        <begin position="1"/>
        <end position="311"/>
    </location>
</feature>
<feature type="domain" description="CheW-like" evidence="1">
    <location>
        <begin position="13"/>
        <end position="164"/>
    </location>
</feature>
<feature type="domain" description="Response regulatory" evidence="2">
    <location>
        <begin position="182"/>
        <end position="308"/>
    </location>
</feature>
<feature type="modified residue" description="4-aspartylphosphate" evidence="2">
    <location>
        <position position="241"/>
    </location>
</feature>
<dbReference type="EMBL" id="AE000511">
    <property type="protein sequence ID" value="AAD07458.1"/>
    <property type="molecule type" value="Genomic_DNA"/>
</dbReference>
<dbReference type="PIR" id="A64569">
    <property type="entry name" value="A64569"/>
</dbReference>
<dbReference type="RefSeq" id="NP_207191.1">
    <property type="nucleotide sequence ID" value="NC_000915.1"/>
</dbReference>
<dbReference type="RefSeq" id="WP_000818647.1">
    <property type="nucleotide sequence ID" value="NC_018939.1"/>
</dbReference>
<dbReference type="SMR" id="O25154"/>
<dbReference type="IntAct" id="O25154">
    <property type="interactions" value="5"/>
</dbReference>
<dbReference type="STRING" id="85962.HP_0393"/>
<dbReference type="PaxDb" id="85962-C694_01995"/>
<dbReference type="EnsemblBacteria" id="AAD07458">
    <property type="protein sequence ID" value="AAD07458"/>
    <property type="gene ID" value="HP_0393"/>
</dbReference>
<dbReference type="KEGG" id="heo:C694_01995"/>
<dbReference type="KEGG" id="hpy:HP_0393"/>
<dbReference type="PATRIC" id="fig|85962.47.peg.417"/>
<dbReference type="eggNOG" id="COG0784">
    <property type="taxonomic scope" value="Bacteria"/>
</dbReference>
<dbReference type="eggNOG" id="COG0835">
    <property type="taxonomic scope" value="Bacteria"/>
</dbReference>
<dbReference type="InParanoid" id="O25154"/>
<dbReference type="OrthoDB" id="9806105at2"/>
<dbReference type="PhylomeDB" id="O25154"/>
<dbReference type="Proteomes" id="UP000000429">
    <property type="component" value="Chromosome"/>
</dbReference>
<dbReference type="GO" id="GO:0006935">
    <property type="term" value="P:chemotaxis"/>
    <property type="evidence" value="ECO:0000318"/>
    <property type="project" value="GO_Central"/>
</dbReference>
<dbReference type="GO" id="GO:0000160">
    <property type="term" value="P:phosphorelay signal transduction system"/>
    <property type="evidence" value="ECO:0007669"/>
    <property type="project" value="InterPro"/>
</dbReference>
<dbReference type="CDD" id="cd00732">
    <property type="entry name" value="CheW"/>
    <property type="match status" value="1"/>
</dbReference>
<dbReference type="CDD" id="cd19924">
    <property type="entry name" value="REC_CheV-like"/>
    <property type="match status" value="1"/>
</dbReference>
<dbReference type="Gene3D" id="3.40.50.2300">
    <property type="match status" value="1"/>
</dbReference>
<dbReference type="Gene3D" id="2.40.50.180">
    <property type="entry name" value="CheA-289, Domain 4"/>
    <property type="match status" value="1"/>
</dbReference>
<dbReference type="Gene3D" id="2.30.30.40">
    <property type="entry name" value="SH3 Domains"/>
    <property type="match status" value="1"/>
</dbReference>
<dbReference type="InterPro" id="IPR024181">
    <property type="entry name" value="Chemotax_regulator_CheV"/>
</dbReference>
<dbReference type="InterPro" id="IPR036061">
    <property type="entry name" value="CheW-like_dom_sf"/>
</dbReference>
<dbReference type="InterPro" id="IPR002545">
    <property type="entry name" value="CheW-lke_dom"/>
</dbReference>
<dbReference type="InterPro" id="IPR011006">
    <property type="entry name" value="CheY-like_superfamily"/>
</dbReference>
<dbReference type="InterPro" id="IPR001789">
    <property type="entry name" value="Sig_transdc_resp-reg_receiver"/>
</dbReference>
<dbReference type="PANTHER" id="PTHR47233">
    <property type="entry name" value="CHEMOTAXIS PROTEIN CHEV"/>
    <property type="match status" value="1"/>
</dbReference>
<dbReference type="PANTHER" id="PTHR47233:SF3">
    <property type="entry name" value="CHEMOTAXIS PROTEIN CHEV"/>
    <property type="match status" value="1"/>
</dbReference>
<dbReference type="Pfam" id="PF01584">
    <property type="entry name" value="CheW"/>
    <property type="match status" value="1"/>
</dbReference>
<dbReference type="Pfam" id="PF00072">
    <property type="entry name" value="Response_reg"/>
    <property type="match status" value="1"/>
</dbReference>
<dbReference type="PIRSF" id="PIRSF002867">
    <property type="entry name" value="CheV"/>
    <property type="match status" value="1"/>
</dbReference>
<dbReference type="SMART" id="SM00260">
    <property type="entry name" value="CheW"/>
    <property type="match status" value="1"/>
</dbReference>
<dbReference type="SMART" id="SM00448">
    <property type="entry name" value="REC"/>
    <property type="match status" value="1"/>
</dbReference>
<dbReference type="SUPFAM" id="SSF50341">
    <property type="entry name" value="CheW-like"/>
    <property type="match status" value="1"/>
</dbReference>
<dbReference type="SUPFAM" id="SSF52172">
    <property type="entry name" value="CheY-like"/>
    <property type="match status" value="1"/>
</dbReference>
<dbReference type="PROSITE" id="PS50851">
    <property type="entry name" value="CHEW"/>
    <property type="match status" value="1"/>
</dbReference>
<dbReference type="PROSITE" id="PS50110">
    <property type="entry name" value="RESPONSE_REGULATORY"/>
    <property type="match status" value="1"/>
</dbReference>
<proteinExistence type="inferred from homology"/>
<name>CHEV3_HELPY</name>